<evidence type="ECO:0000255" key="1">
    <source>
        <dbReference type="HAMAP-Rule" id="MF_01227"/>
    </source>
</evidence>
<gene>
    <name evidence="1" type="primary">pyrG</name>
    <name type="ordered locus">MGAS10750_Spy1665</name>
</gene>
<accession>Q1J4X1</accession>
<name>PYRG_STRPF</name>
<sequence>MTKYIFVTGGVVSSIGKGIVAASLGRLLKNRGLKVTIQKFDPYINIDPGTMSPYQHGEVYVTDDGAETDLDLGHYERFIDINLNKYSNVTTGKIYSEVLRKERKGEYLGATVQVIPHITDALKEKIKRAASTTDSDVIITEVGGTVGDIESLPFLEALRQMKADVGSENVMYIHTTLLPYLKAAGEMKTKPTQHSVKELRGLGIQPNMLVIRTEEPVEQGIKNKLAQFCDVNSEAVIESRDVEHLYQIPLNLQAQSMDQIVCDHLKLNAPQADMTEWSAMVDKVMNLRKTTKIALVGKYVELPDAYLSVVEALKHSGYANDTAIDLKWVNANDVTVDNAADLLGDADGIIVPGGFGQRGTEGKIQAIRYARENDVPMLGICLGMQLTCVEFARHVLNMEGANSFELEPSTKYPIIDIMRDQIDIEDMGGTLRLGLYPCKLKPGSKAAMAYNNQEVVQRRHRHRYEFNNKFRSEFEAAGFVFSGVSPDNRLVEIVELKEKKFFVAAQYHPELQSRPNRPEELYTAFVTAAIKNSN</sequence>
<organism>
    <name type="scientific">Streptococcus pyogenes serotype M4 (strain MGAS10750)</name>
    <dbReference type="NCBI Taxonomy" id="370554"/>
    <lineage>
        <taxon>Bacteria</taxon>
        <taxon>Bacillati</taxon>
        <taxon>Bacillota</taxon>
        <taxon>Bacilli</taxon>
        <taxon>Lactobacillales</taxon>
        <taxon>Streptococcaceae</taxon>
        <taxon>Streptococcus</taxon>
    </lineage>
</organism>
<dbReference type="EC" id="6.3.4.2" evidence="1"/>
<dbReference type="EMBL" id="CP000262">
    <property type="protein sequence ID" value="ABF38615.1"/>
    <property type="molecule type" value="Genomic_DNA"/>
</dbReference>
<dbReference type="SMR" id="Q1J4X1"/>
<dbReference type="MEROPS" id="C26.964"/>
<dbReference type="KEGG" id="spi:MGAS10750_Spy1665"/>
<dbReference type="HOGENOM" id="CLU_011675_5_0_9"/>
<dbReference type="UniPathway" id="UPA00159">
    <property type="reaction ID" value="UER00277"/>
</dbReference>
<dbReference type="Proteomes" id="UP000002434">
    <property type="component" value="Chromosome"/>
</dbReference>
<dbReference type="GO" id="GO:0005829">
    <property type="term" value="C:cytosol"/>
    <property type="evidence" value="ECO:0007669"/>
    <property type="project" value="TreeGrafter"/>
</dbReference>
<dbReference type="GO" id="GO:0005524">
    <property type="term" value="F:ATP binding"/>
    <property type="evidence" value="ECO:0007669"/>
    <property type="project" value="UniProtKB-KW"/>
</dbReference>
<dbReference type="GO" id="GO:0003883">
    <property type="term" value="F:CTP synthase activity"/>
    <property type="evidence" value="ECO:0007669"/>
    <property type="project" value="UniProtKB-UniRule"/>
</dbReference>
<dbReference type="GO" id="GO:0004359">
    <property type="term" value="F:glutaminase activity"/>
    <property type="evidence" value="ECO:0007669"/>
    <property type="project" value="RHEA"/>
</dbReference>
<dbReference type="GO" id="GO:0042802">
    <property type="term" value="F:identical protein binding"/>
    <property type="evidence" value="ECO:0007669"/>
    <property type="project" value="TreeGrafter"/>
</dbReference>
<dbReference type="GO" id="GO:0046872">
    <property type="term" value="F:metal ion binding"/>
    <property type="evidence" value="ECO:0007669"/>
    <property type="project" value="UniProtKB-KW"/>
</dbReference>
<dbReference type="GO" id="GO:0044210">
    <property type="term" value="P:'de novo' CTP biosynthetic process"/>
    <property type="evidence" value="ECO:0007669"/>
    <property type="project" value="UniProtKB-UniRule"/>
</dbReference>
<dbReference type="GO" id="GO:0019856">
    <property type="term" value="P:pyrimidine nucleobase biosynthetic process"/>
    <property type="evidence" value="ECO:0007669"/>
    <property type="project" value="TreeGrafter"/>
</dbReference>
<dbReference type="CDD" id="cd03113">
    <property type="entry name" value="CTPS_N"/>
    <property type="match status" value="1"/>
</dbReference>
<dbReference type="CDD" id="cd01746">
    <property type="entry name" value="GATase1_CTP_Synthase"/>
    <property type="match status" value="1"/>
</dbReference>
<dbReference type="FunFam" id="3.40.50.300:FF:000009">
    <property type="entry name" value="CTP synthase"/>
    <property type="match status" value="1"/>
</dbReference>
<dbReference type="FunFam" id="3.40.50.880:FF:000002">
    <property type="entry name" value="CTP synthase"/>
    <property type="match status" value="1"/>
</dbReference>
<dbReference type="Gene3D" id="3.40.50.880">
    <property type="match status" value="1"/>
</dbReference>
<dbReference type="Gene3D" id="3.40.50.300">
    <property type="entry name" value="P-loop containing nucleotide triphosphate hydrolases"/>
    <property type="match status" value="1"/>
</dbReference>
<dbReference type="HAMAP" id="MF_01227">
    <property type="entry name" value="PyrG"/>
    <property type="match status" value="1"/>
</dbReference>
<dbReference type="InterPro" id="IPR029062">
    <property type="entry name" value="Class_I_gatase-like"/>
</dbReference>
<dbReference type="InterPro" id="IPR004468">
    <property type="entry name" value="CTP_synthase"/>
</dbReference>
<dbReference type="InterPro" id="IPR017456">
    <property type="entry name" value="CTP_synthase_N"/>
</dbReference>
<dbReference type="InterPro" id="IPR017926">
    <property type="entry name" value="GATASE"/>
</dbReference>
<dbReference type="InterPro" id="IPR033828">
    <property type="entry name" value="GATase1_CTP_Synthase"/>
</dbReference>
<dbReference type="InterPro" id="IPR027417">
    <property type="entry name" value="P-loop_NTPase"/>
</dbReference>
<dbReference type="NCBIfam" id="NF003792">
    <property type="entry name" value="PRK05380.1"/>
    <property type="match status" value="1"/>
</dbReference>
<dbReference type="NCBIfam" id="TIGR00337">
    <property type="entry name" value="PyrG"/>
    <property type="match status" value="1"/>
</dbReference>
<dbReference type="PANTHER" id="PTHR11550">
    <property type="entry name" value="CTP SYNTHASE"/>
    <property type="match status" value="1"/>
</dbReference>
<dbReference type="PANTHER" id="PTHR11550:SF0">
    <property type="entry name" value="CTP SYNTHASE-RELATED"/>
    <property type="match status" value="1"/>
</dbReference>
<dbReference type="Pfam" id="PF06418">
    <property type="entry name" value="CTP_synth_N"/>
    <property type="match status" value="1"/>
</dbReference>
<dbReference type="Pfam" id="PF00117">
    <property type="entry name" value="GATase"/>
    <property type="match status" value="1"/>
</dbReference>
<dbReference type="SUPFAM" id="SSF52317">
    <property type="entry name" value="Class I glutamine amidotransferase-like"/>
    <property type="match status" value="1"/>
</dbReference>
<dbReference type="SUPFAM" id="SSF52540">
    <property type="entry name" value="P-loop containing nucleoside triphosphate hydrolases"/>
    <property type="match status" value="1"/>
</dbReference>
<dbReference type="PROSITE" id="PS51273">
    <property type="entry name" value="GATASE_TYPE_1"/>
    <property type="match status" value="1"/>
</dbReference>
<keyword id="KW-0067">ATP-binding</keyword>
<keyword id="KW-0315">Glutamine amidotransferase</keyword>
<keyword id="KW-0436">Ligase</keyword>
<keyword id="KW-0460">Magnesium</keyword>
<keyword id="KW-0479">Metal-binding</keyword>
<keyword id="KW-0547">Nucleotide-binding</keyword>
<keyword id="KW-0665">Pyrimidine biosynthesis</keyword>
<protein>
    <recommendedName>
        <fullName evidence="1">CTP synthase</fullName>
        <ecNumber evidence="1">6.3.4.2</ecNumber>
    </recommendedName>
    <alternativeName>
        <fullName evidence="1">Cytidine 5'-triphosphate synthase</fullName>
    </alternativeName>
    <alternativeName>
        <fullName evidence="1">Cytidine triphosphate synthetase</fullName>
        <shortName evidence="1">CTP synthetase</shortName>
        <shortName evidence="1">CTPS</shortName>
    </alternativeName>
    <alternativeName>
        <fullName evidence="1">UTP--ammonia ligase</fullName>
    </alternativeName>
</protein>
<comment type="function">
    <text evidence="1">Catalyzes the ATP-dependent amination of UTP to CTP with either L-glutamine or ammonia as the source of nitrogen. Regulates intracellular CTP levels through interactions with the four ribonucleotide triphosphates.</text>
</comment>
<comment type="catalytic activity">
    <reaction evidence="1">
        <text>UTP + L-glutamine + ATP + H2O = CTP + L-glutamate + ADP + phosphate + 2 H(+)</text>
        <dbReference type="Rhea" id="RHEA:26426"/>
        <dbReference type="ChEBI" id="CHEBI:15377"/>
        <dbReference type="ChEBI" id="CHEBI:15378"/>
        <dbReference type="ChEBI" id="CHEBI:29985"/>
        <dbReference type="ChEBI" id="CHEBI:30616"/>
        <dbReference type="ChEBI" id="CHEBI:37563"/>
        <dbReference type="ChEBI" id="CHEBI:43474"/>
        <dbReference type="ChEBI" id="CHEBI:46398"/>
        <dbReference type="ChEBI" id="CHEBI:58359"/>
        <dbReference type="ChEBI" id="CHEBI:456216"/>
        <dbReference type="EC" id="6.3.4.2"/>
    </reaction>
</comment>
<comment type="catalytic activity">
    <reaction evidence="1">
        <text>L-glutamine + H2O = L-glutamate + NH4(+)</text>
        <dbReference type="Rhea" id="RHEA:15889"/>
        <dbReference type="ChEBI" id="CHEBI:15377"/>
        <dbReference type="ChEBI" id="CHEBI:28938"/>
        <dbReference type="ChEBI" id="CHEBI:29985"/>
        <dbReference type="ChEBI" id="CHEBI:58359"/>
    </reaction>
</comment>
<comment type="catalytic activity">
    <reaction evidence="1">
        <text>UTP + NH4(+) + ATP = CTP + ADP + phosphate + 2 H(+)</text>
        <dbReference type="Rhea" id="RHEA:16597"/>
        <dbReference type="ChEBI" id="CHEBI:15378"/>
        <dbReference type="ChEBI" id="CHEBI:28938"/>
        <dbReference type="ChEBI" id="CHEBI:30616"/>
        <dbReference type="ChEBI" id="CHEBI:37563"/>
        <dbReference type="ChEBI" id="CHEBI:43474"/>
        <dbReference type="ChEBI" id="CHEBI:46398"/>
        <dbReference type="ChEBI" id="CHEBI:456216"/>
    </reaction>
</comment>
<comment type="activity regulation">
    <text evidence="1">Allosterically activated by GTP, when glutamine is the substrate; GTP has no effect on the reaction when ammonia is the substrate. The allosteric effector GTP functions by stabilizing the protein conformation that binds the tetrahedral intermediate(s) formed during glutamine hydrolysis. Inhibited by the product CTP, via allosteric rather than competitive inhibition.</text>
</comment>
<comment type="pathway">
    <text evidence="1">Pyrimidine metabolism; CTP biosynthesis via de novo pathway; CTP from UDP: step 2/2.</text>
</comment>
<comment type="subunit">
    <text evidence="1">Homotetramer.</text>
</comment>
<comment type="miscellaneous">
    <text evidence="1">CTPSs have evolved a hybrid strategy for distinguishing between UTP and CTP. The overlapping regions of the product feedback inhibitory and substrate sites recognize a common feature in both compounds, the triphosphate moiety. To differentiate isosteric substrate and product pyrimidine rings, an additional pocket far from the expected kinase/ligase catalytic site, specifically recognizes the cytosine and ribose portions of the product inhibitor.</text>
</comment>
<comment type="similarity">
    <text evidence="1">Belongs to the CTP synthase family.</text>
</comment>
<feature type="chain" id="PRO_0000266235" description="CTP synthase">
    <location>
        <begin position="1"/>
        <end position="534"/>
    </location>
</feature>
<feature type="domain" description="Glutamine amidotransferase type-1" evidence="1">
    <location>
        <begin position="292"/>
        <end position="534"/>
    </location>
</feature>
<feature type="region of interest" description="Amidoligase domain" evidence="1">
    <location>
        <begin position="1"/>
        <end position="267"/>
    </location>
</feature>
<feature type="active site" description="Nucleophile; for glutamine hydrolysis" evidence="1">
    <location>
        <position position="381"/>
    </location>
</feature>
<feature type="active site" evidence="1">
    <location>
        <position position="508"/>
    </location>
</feature>
<feature type="active site" evidence="1">
    <location>
        <position position="510"/>
    </location>
</feature>
<feature type="binding site" evidence="1">
    <location>
        <position position="13"/>
    </location>
    <ligand>
        <name>CTP</name>
        <dbReference type="ChEBI" id="CHEBI:37563"/>
        <note>allosteric inhibitor</note>
    </ligand>
</feature>
<feature type="binding site" evidence="1">
    <location>
        <position position="13"/>
    </location>
    <ligand>
        <name>UTP</name>
        <dbReference type="ChEBI" id="CHEBI:46398"/>
    </ligand>
</feature>
<feature type="binding site" evidence="1">
    <location>
        <begin position="14"/>
        <end position="19"/>
    </location>
    <ligand>
        <name>ATP</name>
        <dbReference type="ChEBI" id="CHEBI:30616"/>
    </ligand>
</feature>
<feature type="binding site" evidence="1">
    <location>
        <position position="54"/>
    </location>
    <ligand>
        <name>L-glutamine</name>
        <dbReference type="ChEBI" id="CHEBI:58359"/>
    </ligand>
</feature>
<feature type="binding site" evidence="1">
    <location>
        <position position="71"/>
    </location>
    <ligand>
        <name>ATP</name>
        <dbReference type="ChEBI" id="CHEBI:30616"/>
    </ligand>
</feature>
<feature type="binding site" evidence="1">
    <location>
        <position position="71"/>
    </location>
    <ligand>
        <name>Mg(2+)</name>
        <dbReference type="ChEBI" id="CHEBI:18420"/>
    </ligand>
</feature>
<feature type="binding site" evidence="1">
    <location>
        <position position="141"/>
    </location>
    <ligand>
        <name>Mg(2+)</name>
        <dbReference type="ChEBI" id="CHEBI:18420"/>
    </ligand>
</feature>
<feature type="binding site" evidence="1">
    <location>
        <begin position="148"/>
        <end position="150"/>
    </location>
    <ligand>
        <name>CTP</name>
        <dbReference type="ChEBI" id="CHEBI:37563"/>
        <note>allosteric inhibitor</note>
    </ligand>
</feature>
<feature type="binding site" evidence="1">
    <location>
        <begin position="188"/>
        <end position="193"/>
    </location>
    <ligand>
        <name>CTP</name>
        <dbReference type="ChEBI" id="CHEBI:37563"/>
        <note>allosteric inhibitor</note>
    </ligand>
</feature>
<feature type="binding site" evidence="1">
    <location>
        <begin position="188"/>
        <end position="193"/>
    </location>
    <ligand>
        <name>UTP</name>
        <dbReference type="ChEBI" id="CHEBI:46398"/>
    </ligand>
</feature>
<feature type="binding site" evidence="1">
    <location>
        <position position="224"/>
    </location>
    <ligand>
        <name>CTP</name>
        <dbReference type="ChEBI" id="CHEBI:37563"/>
        <note>allosteric inhibitor</note>
    </ligand>
</feature>
<feature type="binding site" evidence="1">
    <location>
        <position position="224"/>
    </location>
    <ligand>
        <name>UTP</name>
        <dbReference type="ChEBI" id="CHEBI:46398"/>
    </ligand>
</feature>
<feature type="binding site" evidence="1">
    <location>
        <begin position="240"/>
        <end position="242"/>
    </location>
    <ligand>
        <name>ATP</name>
        <dbReference type="ChEBI" id="CHEBI:30616"/>
    </ligand>
</feature>
<feature type="binding site" evidence="1">
    <location>
        <position position="354"/>
    </location>
    <ligand>
        <name>L-glutamine</name>
        <dbReference type="ChEBI" id="CHEBI:58359"/>
    </ligand>
</feature>
<feature type="binding site" evidence="1">
    <location>
        <begin position="382"/>
        <end position="385"/>
    </location>
    <ligand>
        <name>L-glutamine</name>
        <dbReference type="ChEBI" id="CHEBI:58359"/>
    </ligand>
</feature>
<feature type="binding site" evidence="1">
    <location>
        <position position="405"/>
    </location>
    <ligand>
        <name>L-glutamine</name>
        <dbReference type="ChEBI" id="CHEBI:58359"/>
    </ligand>
</feature>
<feature type="binding site" evidence="1">
    <location>
        <position position="463"/>
    </location>
    <ligand>
        <name>L-glutamine</name>
        <dbReference type="ChEBI" id="CHEBI:58359"/>
    </ligand>
</feature>
<reference key="1">
    <citation type="journal article" date="2006" name="Proc. Natl. Acad. Sci. U.S.A.">
        <title>Molecular genetic anatomy of inter- and intraserotype variation in the human bacterial pathogen group A Streptococcus.</title>
        <authorList>
            <person name="Beres S.B."/>
            <person name="Richter E.W."/>
            <person name="Nagiec M.J."/>
            <person name="Sumby P."/>
            <person name="Porcella S.F."/>
            <person name="DeLeo F.R."/>
            <person name="Musser J.M."/>
        </authorList>
    </citation>
    <scope>NUCLEOTIDE SEQUENCE [LARGE SCALE GENOMIC DNA]</scope>
    <source>
        <strain>MGAS10750</strain>
    </source>
</reference>
<proteinExistence type="inferred from homology"/>